<gene>
    <name evidence="1" type="primary">hrcA</name>
    <name type="ordered locus">SynWH7803_2296</name>
</gene>
<dbReference type="EMBL" id="CT971583">
    <property type="protein sequence ID" value="CAK24722.1"/>
    <property type="molecule type" value="Genomic_DNA"/>
</dbReference>
<dbReference type="SMR" id="A5GP57"/>
<dbReference type="STRING" id="32051.SynWH7803_2296"/>
<dbReference type="KEGG" id="syx:SynWH7803_2296"/>
<dbReference type="eggNOG" id="COG1420">
    <property type="taxonomic scope" value="Bacteria"/>
</dbReference>
<dbReference type="HOGENOM" id="CLU_050019_1_0_3"/>
<dbReference type="OrthoDB" id="9783139at2"/>
<dbReference type="Proteomes" id="UP000001566">
    <property type="component" value="Chromosome"/>
</dbReference>
<dbReference type="GO" id="GO:0003677">
    <property type="term" value="F:DNA binding"/>
    <property type="evidence" value="ECO:0007669"/>
    <property type="project" value="InterPro"/>
</dbReference>
<dbReference type="GO" id="GO:0045892">
    <property type="term" value="P:negative regulation of DNA-templated transcription"/>
    <property type="evidence" value="ECO:0007669"/>
    <property type="project" value="UniProtKB-UniRule"/>
</dbReference>
<dbReference type="Gene3D" id="3.30.450.40">
    <property type="match status" value="1"/>
</dbReference>
<dbReference type="Gene3D" id="1.10.10.10">
    <property type="entry name" value="Winged helix-like DNA-binding domain superfamily/Winged helix DNA-binding domain"/>
    <property type="match status" value="1"/>
</dbReference>
<dbReference type="HAMAP" id="MF_00081">
    <property type="entry name" value="HrcA"/>
    <property type="match status" value="1"/>
</dbReference>
<dbReference type="InterPro" id="IPR029016">
    <property type="entry name" value="GAF-like_dom_sf"/>
</dbReference>
<dbReference type="InterPro" id="IPR002571">
    <property type="entry name" value="HrcA"/>
</dbReference>
<dbReference type="InterPro" id="IPR021153">
    <property type="entry name" value="HrcA_C"/>
</dbReference>
<dbReference type="InterPro" id="IPR036388">
    <property type="entry name" value="WH-like_DNA-bd_sf"/>
</dbReference>
<dbReference type="InterPro" id="IPR036390">
    <property type="entry name" value="WH_DNA-bd_sf"/>
</dbReference>
<dbReference type="NCBIfam" id="TIGR00331">
    <property type="entry name" value="hrcA"/>
    <property type="match status" value="1"/>
</dbReference>
<dbReference type="PANTHER" id="PTHR34824">
    <property type="entry name" value="HEAT-INDUCIBLE TRANSCRIPTION REPRESSOR HRCA"/>
    <property type="match status" value="1"/>
</dbReference>
<dbReference type="PANTHER" id="PTHR34824:SF1">
    <property type="entry name" value="HEAT-INDUCIBLE TRANSCRIPTION REPRESSOR HRCA"/>
    <property type="match status" value="1"/>
</dbReference>
<dbReference type="Pfam" id="PF01628">
    <property type="entry name" value="HrcA"/>
    <property type="match status" value="1"/>
</dbReference>
<dbReference type="PIRSF" id="PIRSF005485">
    <property type="entry name" value="HrcA"/>
    <property type="match status" value="1"/>
</dbReference>
<dbReference type="SUPFAM" id="SSF55781">
    <property type="entry name" value="GAF domain-like"/>
    <property type="match status" value="1"/>
</dbReference>
<dbReference type="SUPFAM" id="SSF46785">
    <property type="entry name" value="Winged helix' DNA-binding domain"/>
    <property type="match status" value="1"/>
</dbReference>
<name>HRCA_SYNPW</name>
<sequence length="331" mass="36449">MELLPRRQQEVLQATVHHYVDTIEPVGSKTLVQRFGLQASSATVRSAMGALEQKGLLVQPHPSAGRIPSPRGYRHYVDCLLPKPGAAVHHLEQELTQLSLRWAALDDLLQQLTRRLTDFTGLMSLITLPQPSEQRLHAIRLVPTDERLLVMLVADSSQTHHLNLRLPHGSVHQVAALERWTDDQLHQSGQISWESLPQQLQTCGQALREALHNEEGRFISPSDQSAHVHGVSRLVAQPEFSDSTKVAPLLDLMDCNPAAFIPSGPGHDDWVWIGGEHPHTALSDCSVIQSSYRDGQGGVGQVALVGPMRMAYATARAAVQCVAKHLNHLLS</sequence>
<proteinExistence type="inferred from homology"/>
<reference key="1">
    <citation type="submission" date="2006-05" db="EMBL/GenBank/DDBJ databases">
        <authorList>
            <consortium name="Genoscope"/>
        </authorList>
    </citation>
    <scope>NUCLEOTIDE SEQUENCE [LARGE SCALE GENOMIC DNA]</scope>
    <source>
        <strain>WH7803</strain>
    </source>
</reference>
<organism>
    <name type="scientific">Synechococcus sp. (strain WH7803)</name>
    <dbReference type="NCBI Taxonomy" id="32051"/>
    <lineage>
        <taxon>Bacteria</taxon>
        <taxon>Bacillati</taxon>
        <taxon>Cyanobacteriota</taxon>
        <taxon>Cyanophyceae</taxon>
        <taxon>Synechococcales</taxon>
        <taxon>Synechococcaceae</taxon>
        <taxon>Synechococcus</taxon>
    </lineage>
</organism>
<keyword id="KW-1185">Reference proteome</keyword>
<keyword id="KW-0678">Repressor</keyword>
<keyword id="KW-0346">Stress response</keyword>
<keyword id="KW-0804">Transcription</keyword>
<keyword id="KW-0805">Transcription regulation</keyword>
<protein>
    <recommendedName>
        <fullName evidence="1">Heat-inducible transcription repressor HrcA</fullName>
    </recommendedName>
</protein>
<accession>A5GP57</accession>
<feature type="chain" id="PRO_1000010471" description="Heat-inducible transcription repressor HrcA">
    <location>
        <begin position="1"/>
        <end position="331"/>
    </location>
</feature>
<comment type="function">
    <text evidence="1">Negative regulator of class I heat shock genes (grpE-dnaK-dnaJ and groELS operons). Prevents heat-shock induction of these operons.</text>
</comment>
<comment type="similarity">
    <text evidence="1">Belongs to the HrcA family.</text>
</comment>
<evidence type="ECO:0000255" key="1">
    <source>
        <dbReference type="HAMAP-Rule" id="MF_00081"/>
    </source>
</evidence>